<dbReference type="EC" id="2.4.2.7" evidence="1"/>
<dbReference type="EMBL" id="CP000388">
    <property type="protein sequence ID" value="ABG41406.1"/>
    <property type="molecule type" value="Genomic_DNA"/>
</dbReference>
<dbReference type="RefSeq" id="WP_006991928.1">
    <property type="nucleotide sequence ID" value="NC_008228.1"/>
</dbReference>
<dbReference type="SMR" id="Q15RT2"/>
<dbReference type="STRING" id="342610.Patl_2898"/>
<dbReference type="KEGG" id="pat:Patl_2898"/>
<dbReference type="eggNOG" id="COG0503">
    <property type="taxonomic scope" value="Bacteria"/>
</dbReference>
<dbReference type="HOGENOM" id="CLU_063339_3_0_6"/>
<dbReference type="OrthoDB" id="9803963at2"/>
<dbReference type="UniPathway" id="UPA00588">
    <property type="reaction ID" value="UER00646"/>
</dbReference>
<dbReference type="Proteomes" id="UP000001981">
    <property type="component" value="Chromosome"/>
</dbReference>
<dbReference type="GO" id="GO:0005737">
    <property type="term" value="C:cytoplasm"/>
    <property type="evidence" value="ECO:0007669"/>
    <property type="project" value="UniProtKB-SubCell"/>
</dbReference>
<dbReference type="GO" id="GO:0002055">
    <property type="term" value="F:adenine binding"/>
    <property type="evidence" value="ECO:0007669"/>
    <property type="project" value="TreeGrafter"/>
</dbReference>
<dbReference type="GO" id="GO:0003999">
    <property type="term" value="F:adenine phosphoribosyltransferase activity"/>
    <property type="evidence" value="ECO:0007669"/>
    <property type="project" value="UniProtKB-UniRule"/>
</dbReference>
<dbReference type="GO" id="GO:0016208">
    <property type="term" value="F:AMP binding"/>
    <property type="evidence" value="ECO:0007669"/>
    <property type="project" value="TreeGrafter"/>
</dbReference>
<dbReference type="GO" id="GO:0006168">
    <property type="term" value="P:adenine salvage"/>
    <property type="evidence" value="ECO:0007669"/>
    <property type="project" value="InterPro"/>
</dbReference>
<dbReference type="GO" id="GO:0044209">
    <property type="term" value="P:AMP salvage"/>
    <property type="evidence" value="ECO:0007669"/>
    <property type="project" value="UniProtKB-UniRule"/>
</dbReference>
<dbReference type="GO" id="GO:0006166">
    <property type="term" value="P:purine ribonucleoside salvage"/>
    <property type="evidence" value="ECO:0007669"/>
    <property type="project" value="UniProtKB-KW"/>
</dbReference>
<dbReference type="CDD" id="cd06223">
    <property type="entry name" value="PRTases_typeI"/>
    <property type="match status" value="1"/>
</dbReference>
<dbReference type="FunFam" id="3.40.50.2020:FF:000004">
    <property type="entry name" value="Adenine phosphoribosyltransferase"/>
    <property type="match status" value="1"/>
</dbReference>
<dbReference type="Gene3D" id="3.40.50.2020">
    <property type="match status" value="1"/>
</dbReference>
<dbReference type="HAMAP" id="MF_00004">
    <property type="entry name" value="Aden_phosphoribosyltr"/>
    <property type="match status" value="1"/>
</dbReference>
<dbReference type="InterPro" id="IPR005764">
    <property type="entry name" value="Ade_phspho_trans"/>
</dbReference>
<dbReference type="InterPro" id="IPR000836">
    <property type="entry name" value="PRibTrfase_dom"/>
</dbReference>
<dbReference type="InterPro" id="IPR029057">
    <property type="entry name" value="PRTase-like"/>
</dbReference>
<dbReference type="InterPro" id="IPR050054">
    <property type="entry name" value="UPRTase/APRTase"/>
</dbReference>
<dbReference type="NCBIfam" id="TIGR01090">
    <property type="entry name" value="apt"/>
    <property type="match status" value="1"/>
</dbReference>
<dbReference type="NCBIfam" id="NF002632">
    <property type="entry name" value="PRK02304.1-1"/>
    <property type="match status" value="1"/>
</dbReference>
<dbReference type="NCBIfam" id="NF002634">
    <property type="entry name" value="PRK02304.1-3"/>
    <property type="match status" value="1"/>
</dbReference>
<dbReference type="NCBIfam" id="NF002636">
    <property type="entry name" value="PRK02304.1-5"/>
    <property type="match status" value="1"/>
</dbReference>
<dbReference type="PANTHER" id="PTHR32315">
    <property type="entry name" value="ADENINE PHOSPHORIBOSYLTRANSFERASE"/>
    <property type="match status" value="1"/>
</dbReference>
<dbReference type="PANTHER" id="PTHR32315:SF3">
    <property type="entry name" value="ADENINE PHOSPHORIBOSYLTRANSFERASE"/>
    <property type="match status" value="1"/>
</dbReference>
<dbReference type="Pfam" id="PF00156">
    <property type="entry name" value="Pribosyltran"/>
    <property type="match status" value="1"/>
</dbReference>
<dbReference type="SUPFAM" id="SSF53271">
    <property type="entry name" value="PRTase-like"/>
    <property type="match status" value="1"/>
</dbReference>
<dbReference type="PROSITE" id="PS00103">
    <property type="entry name" value="PUR_PYR_PR_TRANSFER"/>
    <property type="match status" value="1"/>
</dbReference>
<protein>
    <recommendedName>
        <fullName evidence="1">Adenine phosphoribosyltransferase</fullName>
        <shortName evidence="1">APRT</shortName>
        <ecNumber evidence="1">2.4.2.7</ecNumber>
    </recommendedName>
</protein>
<keyword id="KW-0963">Cytoplasm</keyword>
<keyword id="KW-0328">Glycosyltransferase</keyword>
<keyword id="KW-0660">Purine salvage</keyword>
<keyword id="KW-0808">Transferase</keyword>
<accession>Q15RT2</accession>
<proteinExistence type="inferred from homology"/>
<evidence type="ECO:0000255" key="1">
    <source>
        <dbReference type="HAMAP-Rule" id="MF_00004"/>
    </source>
</evidence>
<sequence>MPAAYIKSVIKTVPDYPKPGILFRDVTSILEDHKAYTTSIELLVKEFAPYNFDKVAGTEARGFLFGAPLAIELGIGFIPVRKPNKLPRKVISESYDLEYGTDCLEIHEDAVKPGEKVLMLDDLLATGGTMIATANLIRRLGGIVEHAGFVISLPDLGGEAKLQEIGVQSHSICEFEGE</sequence>
<organism>
    <name type="scientific">Pseudoalteromonas atlantica (strain T6c / ATCC BAA-1087)</name>
    <dbReference type="NCBI Taxonomy" id="3042615"/>
    <lineage>
        <taxon>Bacteria</taxon>
        <taxon>Pseudomonadati</taxon>
        <taxon>Pseudomonadota</taxon>
        <taxon>Gammaproteobacteria</taxon>
        <taxon>Alteromonadales</taxon>
        <taxon>Alteromonadaceae</taxon>
        <taxon>Paraglaciecola</taxon>
    </lineage>
</organism>
<comment type="function">
    <text evidence="1">Catalyzes a salvage reaction resulting in the formation of AMP, that is energically less costly than de novo synthesis.</text>
</comment>
<comment type="catalytic activity">
    <reaction evidence="1">
        <text>AMP + diphosphate = 5-phospho-alpha-D-ribose 1-diphosphate + adenine</text>
        <dbReference type="Rhea" id="RHEA:16609"/>
        <dbReference type="ChEBI" id="CHEBI:16708"/>
        <dbReference type="ChEBI" id="CHEBI:33019"/>
        <dbReference type="ChEBI" id="CHEBI:58017"/>
        <dbReference type="ChEBI" id="CHEBI:456215"/>
        <dbReference type="EC" id="2.4.2.7"/>
    </reaction>
</comment>
<comment type="pathway">
    <text evidence="1">Purine metabolism; AMP biosynthesis via salvage pathway; AMP from adenine: step 1/1.</text>
</comment>
<comment type="subunit">
    <text evidence="1">Homodimer.</text>
</comment>
<comment type="subcellular location">
    <subcellularLocation>
        <location evidence="1">Cytoplasm</location>
    </subcellularLocation>
</comment>
<comment type="similarity">
    <text evidence="1">Belongs to the purine/pyrimidine phosphoribosyltransferase family.</text>
</comment>
<reference key="1">
    <citation type="submission" date="2006-06" db="EMBL/GenBank/DDBJ databases">
        <title>Complete sequence of Pseudoalteromonas atlantica T6c.</title>
        <authorList>
            <consortium name="US DOE Joint Genome Institute"/>
            <person name="Copeland A."/>
            <person name="Lucas S."/>
            <person name="Lapidus A."/>
            <person name="Barry K."/>
            <person name="Detter J.C."/>
            <person name="Glavina del Rio T."/>
            <person name="Hammon N."/>
            <person name="Israni S."/>
            <person name="Dalin E."/>
            <person name="Tice H."/>
            <person name="Pitluck S."/>
            <person name="Saunders E."/>
            <person name="Brettin T."/>
            <person name="Bruce D."/>
            <person name="Han C."/>
            <person name="Tapia R."/>
            <person name="Gilna P."/>
            <person name="Schmutz J."/>
            <person name="Larimer F."/>
            <person name="Land M."/>
            <person name="Hauser L."/>
            <person name="Kyrpides N."/>
            <person name="Kim E."/>
            <person name="Karls A.C."/>
            <person name="Bartlett D."/>
            <person name="Higgins B.P."/>
            <person name="Richardson P."/>
        </authorList>
    </citation>
    <scope>NUCLEOTIDE SEQUENCE [LARGE SCALE GENOMIC DNA]</scope>
    <source>
        <strain>T6c / ATCC BAA-1087</strain>
    </source>
</reference>
<gene>
    <name evidence="1" type="primary">apt</name>
    <name type="ordered locus">Patl_2898</name>
</gene>
<feature type="chain" id="PRO_0000321386" description="Adenine phosphoribosyltransferase">
    <location>
        <begin position="1"/>
        <end position="178"/>
    </location>
</feature>
<name>APT_PSEA6</name>